<proteinExistence type="inferred from homology"/>
<evidence type="ECO:0000255" key="1">
    <source>
        <dbReference type="HAMAP-Rule" id="MF_00445"/>
    </source>
</evidence>
<feature type="chain" id="PRO_0000391107" description="NADH-quinone oxidoreductase subunit N">
    <location>
        <begin position="1"/>
        <end position="487"/>
    </location>
</feature>
<feature type="transmembrane region" description="Helical" evidence="1">
    <location>
        <begin position="12"/>
        <end position="32"/>
    </location>
</feature>
<feature type="transmembrane region" description="Helical" evidence="1">
    <location>
        <begin position="40"/>
        <end position="60"/>
    </location>
</feature>
<feature type="transmembrane region" description="Helical" evidence="1">
    <location>
        <begin position="79"/>
        <end position="99"/>
    </location>
</feature>
<feature type="transmembrane region" description="Helical" evidence="1">
    <location>
        <begin position="104"/>
        <end position="124"/>
    </location>
</feature>
<feature type="transmembrane region" description="Helical" evidence="1">
    <location>
        <begin position="129"/>
        <end position="149"/>
    </location>
</feature>
<feature type="transmembrane region" description="Helical" evidence="1">
    <location>
        <begin position="164"/>
        <end position="184"/>
    </location>
</feature>
<feature type="transmembrane region" description="Helical" evidence="1">
    <location>
        <begin position="201"/>
        <end position="221"/>
    </location>
</feature>
<feature type="transmembrane region" description="Helical" evidence="1">
    <location>
        <begin position="248"/>
        <end position="268"/>
    </location>
</feature>
<feature type="transmembrane region" description="Helical" evidence="1">
    <location>
        <begin position="281"/>
        <end position="301"/>
    </location>
</feature>
<feature type="transmembrane region" description="Helical" evidence="1">
    <location>
        <begin position="310"/>
        <end position="330"/>
    </location>
</feature>
<feature type="transmembrane region" description="Helical" evidence="1">
    <location>
        <begin position="332"/>
        <end position="352"/>
    </location>
</feature>
<feature type="transmembrane region" description="Helical" evidence="1">
    <location>
        <begin position="378"/>
        <end position="398"/>
    </location>
</feature>
<feature type="transmembrane region" description="Helical" evidence="1">
    <location>
        <begin position="411"/>
        <end position="431"/>
    </location>
</feature>
<feature type="transmembrane region" description="Helical" evidence="1">
    <location>
        <begin position="455"/>
        <end position="475"/>
    </location>
</feature>
<gene>
    <name evidence="1" type="primary">nuoN</name>
    <name type="ordered locus">BARBAKC583_0791</name>
</gene>
<organism>
    <name type="scientific">Bartonella bacilliformis (strain ATCC 35685 / KC583 / Herrer 020/F12,63)</name>
    <dbReference type="NCBI Taxonomy" id="360095"/>
    <lineage>
        <taxon>Bacteria</taxon>
        <taxon>Pseudomonadati</taxon>
        <taxon>Pseudomonadota</taxon>
        <taxon>Alphaproteobacteria</taxon>
        <taxon>Hyphomicrobiales</taxon>
        <taxon>Bartonellaceae</taxon>
        <taxon>Bartonella</taxon>
    </lineage>
</organism>
<accession>A1USY0</accession>
<protein>
    <recommendedName>
        <fullName evidence="1">NADH-quinone oxidoreductase subunit N</fullName>
        <ecNumber evidence="1">7.1.1.-</ecNumber>
    </recommendedName>
    <alternativeName>
        <fullName evidence="1">NADH dehydrogenase I subunit N</fullName>
    </alternativeName>
    <alternativeName>
        <fullName evidence="1">NDH-1 subunit N</fullName>
    </alternativeName>
</protein>
<comment type="function">
    <text evidence="1">NDH-1 shuttles electrons from NADH, via FMN and iron-sulfur (Fe-S) centers, to quinones in the respiratory chain. The immediate electron acceptor for the enzyme in this species is believed to be ubiquinone. Couples the redox reaction to proton translocation (for every two electrons transferred, four hydrogen ions are translocated across the cytoplasmic membrane), and thus conserves the redox energy in a proton gradient.</text>
</comment>
<comment type="catalytic activity">
    <reaction evidence="1">
        <text>a quinone + NADH + 5 H(+)(in) = a quinol + NAD(+) + 4 H(+)(out)</text>
        <dbReference type="Rhea" id="RHEA:57888"/>
        <dbReference type="ChEBI" id="CHEBI:15378"/>
        <dbReference type="ChEBI" id="CHEBI:24646"/>
        <dbReference type="ChEBI" id="CHEBI:57540"/>
        <dbReference type="ChEBI" id="CHEBI:57945"/>
        <dbReference type="ChEBI" id="CHEBI:132124"/>
    </reaction>
</comment>
<comment type="subunit">
    <text evidence="1">NDH-1 is composed of 14 different subunits. Subunits NuoA, H, J, K, L, M, N constitute the membrane sector of the complex.</text>
</comment>
<comment type="subcellular location">
    <subcellularLocation>
        <location evidence="1">Cell inner membrane</location>
        <topology evidence="1">Multi-pass membrane protein</topology>
    </subcellularLocation>
</comment>
<comment type="similarity">
    <text evidence="1">Belongs to the complex I subunit 2 family.</text>
</comment>
<reference key="1">
    <citation type="submission" date="2006-12" db="EMBL/GenBank/DDBJ databases">
        <authorList>
            <person name="Hendrix L."/>
            <person name="Mohamoud Y."/>
            <person name="Radune D."/>
            <person name="Shvartsbeyn A."/>
            <person name="Daugherty S."/>
            <person name="Dodson R."/>
            <person name="Durkin A.S."/>
            <person name="Harkins D."/>
            <person name="Huot H."/>
            <person name="Kothari S.P."/>
            <person name="Madupu R."/>
            <person name="Li J."/>
            <person name="Nelson W.C."/>
            <person name="Shrivastava S."/>
            <person name="Giglio M.G."/>
            <person name="Haft D."/>
            <person name="Selengut J."/>
            <person name="Fraser-Ligget C."/>
            <person name="Seshadri R."/>
        </authorList>
    </citation>
    <scope>NUCLEOTIDE SEQUENCE [LARGE SCALE GENOMIC DNA]</scope>
    <source>
        <strain>ATCC 35685 / KC583 / Herrer 020/F12,63</strain>
    </source>
</reference>
<keyword id="KW-0997">Cell inner membrane</keyword>
<keyword id="KW-1003">Cell membrane</keyword>
<keyword id="KW-0472">Membrane</keyword>
<keyword id="KW-0520">NAD</keyword>
<keyword id="KW-0874">Quinone</keyword>
<keyword id="KW-1278">Translocase</keyword>
<keyword id="KW-0812">Transmembrane</keyword>
<keyword id="KW-1133">Transmembrane helix</keyword>
<keyword id="KW-0813">Transport</keyword>
<keyword id="KW-0830">Ubiquinone</keyword>
<dbReference type="EC" id="7.1.1.-" evidence="1"/>
<dbReference type="EMBL" id="CP000524">
    <property type="protein sequence ID" value="ABM45391.1"/>
    <property type="molecule type" value="Genomic_DNA"/>
</dbReference>
<dbReference type="SMR" id="A1USY0"/>
<dbReference type="STRING" id="360095.BARBAKC583_0791"/>
<dbReference type="KEGG" id="bbk:BARBAKC583_0791"/>
<dbReference type="eggNOG" id="COG1007">
    <property type="taxonomic scope" value="Bacteria"/>
</dbReference>
<dbReference type="HOGENOM" id="CLU_007100_1_3_5"/>
<dbReference type="Proteomes" id="UP000000643">
    <property type="component" value="Chromosome"/>
</dbReference>
<dbReference type="GO" id="GO:0005886">
    <property type="term" value="C:plasma membrane"/>
    <property type="evidence" value="ECO:0007669"/>
    <property type="project" value="UniProtKB-SubCell"/>
</dbReference>
<dbReference type="GO" id="GO:0008137">
    <property type="term" value="F:NADH dehydrogenase (ubiquinone) activity"/>
    <property type="evidence" value="ECO:0007669"/>
    <property type="project" value="InterPro"/>
</dbReference>
<dbReference type="GO" id="GO:0050136">
    <property type="term" value="F:NADH:ubiquinone reductase (non-electrogenic) activity"/>
    <property type="evidence" value="ECO:0007669"/>
    <property type="project" value="UniProtKB-UniRule"/>
</dbReference>
<dbReference type="GO" id="GO:0048038">
    <property type="term" value="F:quinone binding"/>
    <property type="evidence" value="ECO:0007669"/>
    <property type="project" value="UniProtKB-KW"/>
</dbReference>
<dbReference type="GO" id="GO:0042773">
    <property type="term" value="P:ATP synthesis coupled electron transport"/>
    <property type="evidence" value="ECO:0007669"/>
    <property type="project" value="InterPro"/>
</dbReference>
<dbReference type="HAMAP" id="MF_00445">
    <property type="entry name" value="NDH1_NuoN_1"/>
    <property type="match status" value="1"/>
</dbReference>
<dbReference type="InterPro" id="IPR010096">
    <property type="entry name" value="NADH-Q_OxRdtase_suN/2"/>
</dbReference>
<dbReference type="InterPro" id="IPR001750">
    <property type="entry name" value="ND/Mrp_TM"/>
</dbReference>
<dbReference type="NCBIfam" id="TIGR01770">
    <property type="entry name" value="NDH_I_N"/>
    <property type="match status" value="1"/>
</dbReference>
<dbReference type="NCBIfam" id="NF004440">
    <property type="entry name" value="PRK05777.1-3"/>
    <property type="match status" value="1"/>
</dbReference>
<dbReference type="PANTHER" id="PTHR22773">
    <property type="entry name" value="NADH DEHYDROGENASE"/>
    <property type="match status" value="1"/>
</dbReference>
<dbReference type="Pfam" id="PF00361">
    <property type="entry name" value="Proton_antipo_M"/>
    <property type="match status" value="1"/>
</dbReference>
<sequence>MLMQTEIIAQLVLILPEILIALGIMALLLIGVYSGAHSYLTVTGLTIALLFATIILIVLFPKDGFFYTNALIIDAFSRYMKILTLIGALFSLILSVGFSSSQKFDIFEFPILVLLATLGMMLMISSGNMLSLYMGLELQSLALYVLAAIHRDNVKSSEAGIKYFVLGALSSGLLLYGISLLYGFTGQIGFREISSALNGNILHLGVIFGIVFILAGLAFKISAVPFHMWTPDVYEGAPTPITAFFAGAPKIAAMALIIRVIVFAFIPLESSDNFMPAWQQILIFMAISSMALGAFAAIGQTNIKRLMAYSSIGHMGYALVGLAAGNILGVKGILIYMTIYLGMTIGSFAFILGMRFSNRYVENIYDLAGLVKTNPFMAIVMTIQLFSLASIPPMAGFFGKWYTFSAAVRAGLVPLAIVGMVLSVIGAFYYLRIIKIMWFDDAKDSFVILSNEIKLCLCLSALFVLFYVFFGFWFSEFAEKAATSLFQ</sequence>
<name>NUON_BARBK</name>